<dbReference type="EC" id="3.1.3.25"/>
<dbReference type="EMBL" id="AL591688">
    <property type="protein sequence ID" value="CAC47357.1"/>
    <property type="molecule type" value="Genomic_DNA"/>
</dbReference>
<dbReference type="RefSeq" id="NP_386884.1">
    <property type="nucleotide sequence ID" value="NC_003047.1"/>
</dbReference>
<dbReference type="RefSeq" id="WP_003536018.1">
    <property type="nucleotide sequence ID" value="NC_003047.1"/>
</dbReference>
<dbReference type="SMR" id="Q92M71"/>
<dbReference type="EnsemblBacteria" id="CAC47357">
    <property type="protein sequence ID" value="CAC47357"/>
    <property type="gene ID" value="SMc03994"/>
</dbReference>
<dbReference type="KEGG" id="sme:SMc03994"/>
<dbReference type="PATRIC" id="fig|266834.11.peg.4290"/>
<dbReference type="eggNOG" id="COG0483">
    <property type="taxonomic scope" value="Bacteria"/>
</dbReference>
<dbReference type="HOGENOM" id="CLU_044118_0_0_5"/>
<dbReference type="OrthoDB" id="9785695at2"/>
<dbReference type="Proteomes" id="UP000001976">
    <property type="component" value="Chromosome"/>
</dbReference>
<dbReference type="GO" id="GO:0008934">
    <property type="term" value="F:inositol monophosphate 1-phosphatase activity"/>
    <property type="evidence" value="ECO:0007669"/>
    <property type="project" value="InterPro"/>
</dbReference>
<dbReference type="GO" id="GO:0046872">
    <property type="term" value="F:metal ion binding"/>
    <property type="evidence" value="ECO:0007669"/>
    <property type="project" value="UniProtKB-KW"/>
</dbReference>
<dbReference type="GO" id="GO:0006020">
    <property type="term" value="P:inositol metabolic process"/>
    <property type="evidence" value="ECO:0007669"/>
    <property type="project" value="TreeGrafter"/>
</dbReference>
<dbReference type="GO" id="GO:0046854">
    <property type="term" value="P:phosphatidylinositol phosphate biosynthetic process"/>
    <property type="evidence" value="ECO:0007669"/>
    <property type="project" value="InterPro"/>
</dbReference>
<dbReference type="GO" id="GO:0007165">
    <property type="term" value="P:signal transduction"/>
    <property type="evidence" value="ECO:0007669"/>
    <property type="project" value="TreeGrafter"/>
</dbReference>
<dbReference type="CDD" id="cd01639">
    <property type="entry name" value="IMPase"/>
    <property type="match status" value="1"/>
</dbReference>
<dbReference type="FunFam" id="3.30.540.10:FF:000003">
    <property type="entry name" value="Inositol-1-monophosphatase"/>
    <property type="match status" value="1"/>
</dbReference>
<dbReference type="Gene3D" id="3.40.190.80">
    <property type="match status" value="1"/>
</dbReference>
<dbReference type="Gene3D" id="3.30.540.10">
    <property type="entry name" value="Fructose-1,6-Bisphosphatase, subunit A, domain 1"/>
    <property type="match status" value="1"/>
</dbReference>
<dbReference type="InterPro" id="IPR033942">
    <property type="entry name" value="IMPase"/>
</dbReference>
<dbReference type="InterPro" id="IPR020583">
    <property type="entry name" value="Inositol_monoP_metal-BS"/>
</dbReference>
<dbReference type="InterPro" id="IPR000760">
    <property type="entry name" value="Inositol_monophosphatase-like"/>
</dbReference>
<dbReference type="InterPro" id="IPR020550">
    <property type="entry name" value="Inositol_monophosphatase_CS"/>
</dbReference>
<dbReference type="InterPro" id="IPR022337">
    <property type="entry name" value="Inositol_monophosphatase_SuhB"/>
</dbReference>
<dbReference type="PANTHER" id="PTHR20854">
    <property type="entry name" value="INOSITOL MONOPHOSPHATASE"/>
    <property type="match status" value="1"/>
</dbReference>
<dbReference type="PANTHER" id="PTHR20854:SF4">
    <property type="entry name" value="INOSITOL-1-MONOPHOSPHATASE-RELATED"/>
    <property type="match status" value="1"/>
</dbReference>
<dbReference type="Pfam" id="PF00459">
    <property type="entry name" value="Inositol_P"/>
    <property type="match status" value="1"/>
</dbReference>
<dbReference type="PRINTS" id="PR00377">
    <property type="entry name" value="IMPHPHTASES"/>
</dbReference>
<dbReference type="PRINTS" id="PR01959">
    <property type="entry name" value="SBIMPHPHTASE"/>
</dbReference>
<dbReference type="SUPFAM" id="SSF56655">
    <property type="entry name" value="Carbohydrate phosphatase"/>
    <property type="match status" value="1"/>
</dbReference>
<dbReference type="PROSITE" id="PS00629">
    <property type="entry name" value="IMP_1"/>
    <property type="match status" value="1"/>
</dbReference>
<dbReference type="PROSITE" id="PS00630">
    <property type="entry name" value="IMP_2"/>
    <property type="match status" value="1"/>
</dbReference>
<comment type="catalytic activity">
    <reaction>
        <text>a myo-inositol phosphate + H2O = myo-inositol + phosphate</text>
        <dbReference type="Rhea" id="RHEA:24056"/>
        <dbReference type="ChEBI" id="CHEBI:15377"/>
        <dbReference type="ChEBI" id="CHEBI:17268"/>
        <dbReference type="ChEBI" id="CHEBI:43474"/>
        <dbReference type="ChEBI" id="CHEBI:84139"/>
        <dbReference type="EC" id="3.1.3.25"/>
    </reaction>
</comment>
<comment type="cofactor">
    <cofactor evidence="1">
        <name>Mg(2+)</name>
        <dbReference type="ChEBI" id="CHEBI:18420"/>
    </cofactor>
</comment>
<comment type="similarity">
    <text evidence="2">Belongs to the inositol monophosphatase superfamily.</text>
</comment>
<sequence>MARSALLNVMVQAVFKAGKSLARDFGEVQNLQVSLKGPADYVSQADRKAERIIREELMKARPTYGFLGEEGEEIKGTDGAHRWIVDPLDGTTNFLHGIPHFAISVALERQGEIVGAVVFNPATDELYTAERGGGAFLNDRRLRVGARKALSDAVIGTGTPHLGRGNHGKYLVELRHVMGEVAGIRRMGSASLDLAYVAAGRFDGFWERDLAAWDMAAGLLLIREAGGWSTDAEGGGKPLEAGSIVCGNEHIAKALREVIQRPIPSK</sequence>
<accession>Q92M71</accession>
<evidence type="ECO:0000250" key="1"/>
<evidence type="ECO:0000305" key="2"/>
<name>SUHB_RHIME</name>
<proteinExistence type="inferred from homology"/>
<protein>
    <recommendedName>
        <fullName>Inositol-1-monophosphatase</fullName>
        <shortName>I-1-Pase</shortName>
        <shortName>IMPase</shortName>
        <shortName>Inositol-1-phosphatase</shortName>
        <ecNumber>3.1.3.25</ecNumber>
    </recommendedName>
</protein>
<reference key="1">
    <citation type="journal article" date="2001" name="Proc. Natl. Acad. Sci. U.S.A.">
        <title>Analysis of the chromosome sequence of the legume symbiont Sinorhizobium meliloti strain 1021.</title>
        <authorList>
            <person name="Capela D."/>
            <person name="Barloy-Hubler F."/>
            <person name="Gouzy J."/>
            <person name="Bothe G."/>
            <person name="Ampe F."/>
            <person name="Batut J."/>
            <person name="Boistard P."/>
            <person name="Becker A."/>
            <person name="Boutry M."/>
            <person name="Cadieu E."/>
            <person name="Dreano S."/>
            <person name="Gloux S."/>
            <person name="Godrie T."/>
            <person name="Goffeau A."/>
            <person name="Kahn D."/>
            <person name="Kiss E."/>
            <person name="Lelaure V."/>
            <person name="Masuy D."/>
            <person name="Pohl T."/>
            <person name="Portetelle D."/>
            <person name="Puehler A."/>
            <person name="Purnelle B."/>
            <person name="Ramsperger U."/>
            <person name="Renard C."/>
            <person name="Thebault P."/>
            <person name="Vandenbol M."/>
            <person name="Weidner S."/>
            <person name="Galibert F."/>
        </authorList>
    </citation>
    <scope>NUCLEOTIDE SEQUENCE [LARGE SCALE GENOMIC DNA]</scope>
    <source>
        <strain>1021</strain>
    </source>
</reference>
<reference key="2">
    <citation type="journal article" date="2001" name="Science">
        <title>The composite genome of the legume symbiont Sinorhizobium meliloti.</title>
        <authorList>
            <person name="Galibert F."/>
            <person name="Finan T.M."/>
            <person name="Long S.R."/>
            <person name="Puehler A."/>
            <person name="Abola P."/>
            <person name="Ampe F."/>
            <person name="Barloy-Hubler F."/>
            <person name="Barnett M.J."/>
            <person name="Becker A."/>
            <person name="Boistard P."/>
            <person name="Bothe G."/>
            <person name="Boutry M."/>
            <person name="Bowser L."/>
            <person name="Buhrmester J."/>
            <person name="Cadieu E."/>
            <person name="Capela D."/>
            <person name="Chain P."/>
            <person name="Cowie A."/>
            <person name="Davis R.W."/>
            <person name="Dreano S."/>
            <person name="Federspiel N.A."/>
            <person name="Fisher R.F."/>
            <person name="Gloux S."/>
            <person name="Godrie T."/>
            <person name="Goffeau A."/>
            <person name="Golding B."/>
            <person name="Gouzy J."/>
            <person name="Gurjal M."/>
            <person name="Hernandez-Lucas I."/>
            <person name="Hong A."/>
            <person name="Huizar L."/>
            <person name="Hyman R.W."/>
            <person name="Jones T."/>
            <person name="Kahn D."/>
            <person name="Kahn M.L."/>
            <person name="Kalman S."/>
            <person name="Keating D.H."/>
            <person name="Kiss E."/>
            <person name="Komp C."/>
            <person name="Lelaure V."/>
            <person name="Masuy D."/>
            <person name="Palm C."/>
            <person name="Peck M.C."/>
            <person name="Pohl T.M."/>
            <person name="Portetelle D."/>
            <person name="Purnelle B."/>
            <person name="Ramsperger U."/>
            <person name="Surzycki R."/>
            <person name="Thebault P."/>
            <person name="Vandenbol M."/>
            <person name="Vorhoelter F.J."/>
            <person name="Weidner S."/>
            <person name="Wells D.H."/>
            <person name="Wong K."/>
            <person name="Yeh K.-C."/>
            <person name="Batut J."/>
        </authorList>
    </citation>
    <scope>NUCLEOTIDE SEQUENCE [LARGE SCALE GENOMIC DNA]</scope>
    <source>
        <strain>1021</strain>
    </source>
</reference>
<gene>
    <name type="primary">suhB</name>
    <name type="ordered locus">R02778</name>
    <name type="ORF">SMc03994</name>
</gene>
<keyword id="KW-0378">Hydrolase</keyword>
<keyword id="KW-0460">Magnesium</keyword>
<keyword id="KW-0479">Metal-binding</keyword>
<keyword id="KW-1185">Reference proteome</keyword>
<organism>
    <name type="scientific">Rhizobium meliloti (strain 1021)</name>
    <name type="common">Ensifer meliloti</name>
    <name type="synonym">Sinorhizobium meliloti</name>
    <dbReference type="NCBI Taxonomy" id="266834"/>
    <lineage>
        <taxon>Bacteria</taxon>
        <taxon>Pseudomonadati</taxon>
        <taxon>Pseudomonadota</taxon>
        <taxon>Alphaproteobacteria</taxon>
        <taxon>Hyphomicrobiales</taxon>
        <taxon>Rhizobiaceae</taxon>
        <taxon>Sinorhizobium/Ensifer group</taxon>
        <taxon>Sinorhizobium</taxon>
    </lineage>
</organism>
<feature type="chain" id="PRO_0000142571" description="Inositol-1-monophosphatase">
    <location>
        <begin position="1"/>
        <end position="266"/>
    </location>
</feature>
<feature type="binding site" evidence="1">
    <location>
        <position position="69"/>
    </location>
    <ligand>
        <name>Mg(2+)</name>
        <dbReference type="ChEBI" id="CHEBI:18420"/>
        <label>1</label>
    </ligand>
</feature>
<feature type="binding site" evidence="1">
    <location>
        <position position="69"/>
    </location>
    <ligand>
        <name>substrate</name>
    </ligand>
</feature>
<feature type="binding site" evidence="1">
    <location>
        <position position="86"/>
    </location>
    <ligand>
        <name>Mg(2+)</name>
        <dbReference type="ChEBI" id="CHEBI:18420"/>
        <label>1</label>
    </ligand>
</feature>
<feature type="binding site" evidence="1">
    <location>
        <position position="86"/>
    </location>
    <ligand>
        <name>Mg(2+)</name>
        <dbReference type="ChEBI" id="CHEBI:18420"/>
        <label>2</label>
    </ligand>
</feature>
<feature type="binding site" evidence="1">
    <location>
        <begin position="88"/>
        <end position="91"/>
    </location>
    <ligand>
        <name>substrate</name>
    </ligand>
</feature>
<feature type="binding site" evidence="1">
    <location>
        <position position="88"/>
    </location>
    <ligand>
        <name>Mg(2+)</name>
        <dbReference type="ChEBI" id="CHEBI:18420"/>
        <label>1</label>
    </ligand>
</feature>
<feature type="binding site" evidence="1">
    <location>
        <position position="89"/>
    </location>
    <ligand>
        <name>Mg(2+)</name>
        <dbReference type="ChEBI" id="CHEBI:18420"/>
        <label>2</label>
    </ligand>
</feature>
<feature type="binding site" evidence="1">
    <location>
        <position position="185"/>
    </location>
    <ligand>
        <name>substrate</name>
    </ligand>
</feature>
<feature type="binding site" evidence="1">
    <location>
        <position position="214"/>
    </location>
    <ligand>
        <name>Mg(2+)</name>
        <dbReference type="ChEBI" id="CHEBI:18420"/>
        <label>2</label>
    </ligand>
</feature>
<feature type="binding site" evidence="1">
    <location>
        <position position="214"/>
    </location>
    <ligand>
        <name>substrate</name>
    </ligand>
</feature>